<name>UBIC_ECOHS</name>
<dbReference type="EC" id="4.1.3.40" evidence="1"/>
<dbReference type="EMBL" id="CP000802">
    <property type="protein sequence ID" value="ABV08443.1"/>
    <property type="molecule type" value="Genomic_DNA"/>
</dbReference>
<dbReference type="RefSeq" id="WP_001295693.1">
    <property type="nucleotide sequence ID" value="NC_009800.1"/>
</dbReference>
<dbReference type="SMR" id="A8A7D9"/>
<dbReference type="KEGG" id="ecx:EcHS_A4279"/>
<dbReference type="HOGENOM" id="CLU_096824_1_0_6"/>
<dbReference type="UniPathway" id="UPA00232"/>
<dbReference type="GO" id="GO:0005829">
    <property type="term" value="C:cytosol"/>
    <property type="evidence" value="ECO:0007669"/>
    <property type="project" value="TreeGrafter"/>
</dbReference>
<dbReference type="GO" id="GO:0008813">
    <property type="term" value="F:chorismate lyase activity"/>
    <property type="evidence" value="ECO:0007669"/>
    <property type="project" value="UniProtKB-UniRule"/>
</dbReference>
<dbReference type="GO" id="GO:0042866">
    <property type="term" value="P:pyruvate biosynthetic process"/>
    <property type="evidence" value="ECO:0007669"/>
    <property type="project" value="UniProtKB-UniRule"/>
</dbReference>
<dbReference type="GO" id="GO:0006744">
    <property type="term" value="P:ubiquinone biosynthetic process"/>
    <property type="evidence" value="ECO:0007669"/>
    <property type="project" value="UniProtKB-UniRule"/>
</dbReference>
<dbReference type="FunFam" id="3.40.1410.10:FF:000002">
    <property type="entry name" value="Chorismate pyruvate-lyase"/>
    <property type="match status" value="1"/>
</dbReference>
<dbReference type="Gene3D" id="3.40.1410.10">
    <property type="entry name" value="Chorismate lyase-like"/>
    <property type="match status" value="1"/>
</dbReference>
<dbReference type="HAMAP" id="MF_01632">
    <property type="entry name" value="UbiC"/>
    <property type="match status" value="1"/>
</dbReference>
<dbReference type="InterPro" id="IPR007440">
    <property type="entry name" value="Chorismate--pyruvate_lyase"/>
</dbReference>
<dbReference type="InterPro" id="IPR028978">
    <property type="entry name" value="Chorismate_lyase_/UTRA_dom_sf"/>
</dbReference>
<dbReference type="NCBIfam" id="NF008656">
    <property type="entry name" value="PRK11655.1"/>
    <property type="match status" value="1"/>
</dbReference>
<dbReference type="PANTHER" id="PTHR38683">
    <property type="entry name" value="CHORISMATE PYRUVATE-LYASE"/>
    <property type="match status" value="1"/>
</dbReference>
<dbReference type="PANTHER" id="PTHR38683:SF1">
    <property type="entry name" value="CHORISMATE PYRUVATE-LYASE"/>
    <property type="match status" value="1"/>
</dbReference>
<dbReference type="Pfam" id="PF04345">
    <property type="entry name" value="Chor_lyase"/>
    <property type="match status" value="1"/>
</dbReference>
<dbReference type="SUPFAM" id="SSF64288">
    <property type="entry name" value="Chorismate lyase-like"/>
    <property type="match status" value="1"/>
</dbReference>
<accession>A8A7D9</accession>
<feature type="chain" id="PRO_1000069743" description="Chorismate pyruvate-lyase">
    <location>
        <begin position="1"/>
        <end position="165"/>
    </location>
</feature>
<feature type="binding site" evidence="1">
    <location>
        <position position="35"/>
    </location>
    <ligand>
        <name>substrate</name>
    </ligand>
</feature>
<feature type="binding site" evidence="1">
    <location>
        <position position="77"/>
    </location>
    <ligand>
        <name>substrate</name>
    </ligand>
</feature>
<feature type="binding site" evidence="1">
    <location>
        <position position="115"/>
    </location>
    <ligand>
        <name>substrate</name>
    </ligand>
</feature>
<feature type="binding site" evidence="1">
    <location>
        <position position="156"/>
    </location>
    <ligand>
        <name>substrate</name>
    </ligand>
</feature>
<organism>
    <name type="scientific">Escherichia coli O9:H4 (strain HS)</name>
    <dbReference type="NCBI Taxonomy" id="331112"/>
    <lineage>
        <taxon>Bacteria</taxon>
        <taxon>Pseudomonadati</taxon>
        <taxon>Pseudomonadota</taxon>
        <taxon>Gammaproteobacteria</taxon>
        <taxon>Enterobacterales</taxon>
        <taxon>Enterobacteriaceae</taxon>
        <taxon>Escherichia</taxon>
    </lineage>
</organism>
<gene>
    <name evidence="1" type="primary">ubiC</name>
    <name type="ordered locus">EcHS_A4279</name>
</gene>
<protein>
    <recommendedName>
        <fullName evidence="1">Chorismate pyruvate-lyase</fullName>
        <shortName evidence="1">CL</shortName>
        <shortName evidence="1">CPL</shortName>
        <ecNumber evidence="1">4.1.3.40</ecNumber>
    </recommendedName>
</protein>
<sequence length="165" mass="18821">MSHPALTQLRALRYFKEIPALDPQLLDWLLLEDSMTKRFEQQGKTVSVTMIREGFVEQNEIPEELPLLPKESRYWLREILLCADGEPWLAGRTVVPVSTLSGPELALQKLGKTPLGRYLFTSSTLTRDFIEIGRDAGLWGRRSRLRLSGKPLLLTELFLPASPLY</sequence>
<evidence type="ECO:0000255" key="1">
    <source>
        <dbReference type="HAMAP-Rule" id="MF_01632"/>
    </source>
</evidence>
<proteinExistence type="inferred from homology"/>
<keyword id="KW-0963">Cytoplasm</keyword>
<keyword id="KW-0456">Lyase</keyword>
<keyword id="KW-0670">Pyruvate</keyword>
<keyword id="KW-0831">Ubiquinone biosynthesis</keyword>
<reference key="1">
    <citation type="journal article" date="2008" name="J. Bacteriol.">
        <title>The pangenome structure of Escherichia coli: comparative genomic analysis of E. coli commensal and pathogenic isolates.</title>
        <authorList>
            <person name="Rasko D.A."/>
            <person name="Rosovitz M.J."/>
            <person name="Myers G.S.A."/>
            <person name="Mongodin E.F."/>
            <person name="Fricke W.F."/>
            <person name="Gajer P."/>
            <person name="Crabtree J."/>
            <person name="Sebaihia M."/>
            <person name="Thomson N.R."/>
            <person name="Chaudhuri R."/>
            <person name="Henderson I.R."/>
            <person name="Sperandio V."/>
            <person name="Ravel J."/>
        </authorList>
    </citation>
    <scope>NUCLEOTIDE SEQUENCE [LARGE SCALE GENOMIC DNA]</scope>
    <source>
        <strain>HS</strain>
    </source>
</reference>
<comment type="function">
    <text evidence="1">Removes the pyruvyl group from chorismate, with concomitant aromatization of the ring, to provide 4-hydroxybenzoate (4HB) for the ubiquinone pathway.</text>
</comment>
<comment type="catalytic activity">
    <reaction evidence="1">
        <text>chorismate = 4-hydroxybenzoate + pyruvate</text>
        <dbReference type="Rhea" id="RHEA:16505"/>
        <dbReference type="ChEBI" id="CHEBI:15361"/>
        <dbReference type="ChEBI" id="CHEBI:17879"/>
        <dbReference type="ChEBI" id="CHEBI:29748"/>
        <dbReference type="EC" id="4.1.3.40"/>
    </reaction>
</comment>
<comment type="pathway">
    <text evidence="1">Cofactor biosynthesis; ubiquinone biosynthesis.</text>
</comment>
<comment type="subunit">
    <text evidence="1">Monomer.</text>
</comment>
<comment type="subcellular location">
    <subcellularLocation>
        <location evidence="1">Cytoplasm</location>
    </subcellularLocation>
</comment>
<comment type="similarity">
    <text evidence="1">Belongs to the UbiC family.</text>
</comment>